<dbReference type="EMBL" id="Y18930">
    <property type="protein sequence ID" value="CAB57595.1"/>
    <property type="molecule type" value="Genomic_DNA"/>
</dbReference>
<dbReference type="EMBL" id="AE006641">
    <property type="protein sequence ID" value="AAK41009.1"/>
    <property type="molecule type" value="Genomic_DNA"/>
</dbReference>
<dbReference type="PIR" id="B90219">
    <property type="entry name" value="B90219"/>
</dbReference>
<dbReference type="RefSeq" id="WP_009991271.1">
    <property type="nucleotide sequence ID" value="NC_002754.1"/>
</dbReference>
<dbReference type="SMR" id="Q9UX97"/>
<dbReference type="FunCoup" id="Q9UX97">
    <property type="interactions" value="267"/>
</dbReference>
<dbReference type="STRING" id="273057.SSO0708"/>
<dbReference type="PaxDb" id="273057-SSO0708"/>
<dbReference type="EnsemblBacteria" id="AAK41009">
    <property type="protein sequence ID" value="AAK41009"/>
    <property type="gene ID" value="SSO0708"/>
</dbReference>
<dbReference type="KEGG" id="sso:SSO0708"/>
<dbReference type="PATRIC" id="fig|273057.12.peg.708"/>
<dbReference type="eggNOG" id="arCOG04095">
    <property type="taxonomic scope" value="Archaea"/>
</dbReference>
<dbReference type="HOGENOM" id="CLU_095071_3_0_2"/>
<dbReference type="InParanoid" id="Q9UX97"/>
<dbReference type="PhylomeDB" id="Q9UX97"/>
<dbReference type="Proteomes" id="UP000001974">
    <property type="component" value="Chromosome"/>
</dbReference>
<dbReference type="GO" id="GO:0022625">
    <property type="term" value="C:cytosolic large ribosomal subunit"/>
    <property type="evidence" value="ECO:0000318"/>
    <property type="project" value="GO_Central"/>
</dbReference>
<dbReference type="GO" id="GO:0070180">
    <property type="term" value="F:large ribosomal subunit rRNA binding"/>
    <property type="evidence" value="ECO:0000318"/>
    <property type="project" value="GO_Central"/>
</dbReference>
<dbReference type="GO" id="GO:0003735">
    <property type="term" value="F:structural constituent of ribosome"/>
    <property type="evidence" value="ECO:0000318"/>
    <property type="project" value="GO_Central"/>
</dbReference>
<dbReference type="GO" id="GO:0006412">
    <property type="term" value="P:translation"/>
    <property type="evidence" value="ECO:0007669"/>
    <property type="project" value="UniProtKB-UniRule"/>
</dbReference>
<dbReference type="CDD" id="cd00337">
    <property type="entry name" value="Ribosomal_uL14"/>
    <property type="match status" value="1"/>
</dbReference>
<dbReference type="FunFam" id="2.40.150.20:FF:000007">
    <property type="entry name" value="50S ribosomal protein L14"/>
    <property type="match status" value="1"/>
</dbReference>
<dbReference type="Gene3D" id="2.40.150.20">
    <property type="entry name" value="Ribosomal protein L14"/>
    <property type="match status" value="1"/>
</dbReference>
<dbReference type="HAMAP" id="MF_01367">
    <property type="entry name" value="Ribosomal_uL14"/>
    <property type="match status" value="1"/>
</dbReference>
<dbReference type="InterPro" id="IPR000218">
    <property type="entry name" value="Ribosomal_uL14"/>
</dbReference>
<dbReference type="InterPro" id="IPR019971">
    <property type="entry name" value="Ribosomal_uL14_arc"/>
</dbReference>
<dbReference type="InterPro" id="IPR019972">
    <property type="entry name" value="Ribosomal_uL14_CS"/>
</dbReference>
<dbReference type="InterPro" id="IPR036853">
    <property type="entry name" value="Ribosomal_uL14_sf"/>
</dbReference>
<dbReference type="NCBIfam" id="NF006344">
    <property type="entry name" value="PRK08571.1"/>
    <property type="match status" value="1"/>
</dbReference>
<dbReference type="NCBIfam" id="TIGR03673">
    <property type="entry name" value="uL14_arch"/>
    <property type="match status" value="1"/>
</dbReference>
<dbReference type="PANTHER" id="PTHR11761">
    <property type="entry name" value="50S/60S RIBOSOMAL PROTEIN L14/L23"/>
    <property type="match status" value="1"/>
</dbReference>
<dbReference type="PANTHER" id="PTHR11761:SF8">
    <property type="entry name" value="LARGE RIBOSOMAL SUBUNIT PROTEIN UL14"/>
    <property type="match status" value="1"/>
</dbReference>
<dbReference type="Pfam" id="PF00238">
    <property type="entry name" value="Ribosomal_L14"/>
    <property type="match status" value="1"/>
</dbReference>
<dbReference type="SMART" id="SM01374">
    <property type="entry name" value="Ribosomal_L14"/>
    <property type="match status" value="1"/>
</dbReference>
<dbReference type="SUPFAM" id="SSF50193">
    <property type="entry name" value="Ribosomal protein L14"/>
    <property type="match status" value="1"/>
</dbReference>
<dbReference type="PROSITE" id="PS00049">
    <property type="entry name" value="RIBOSOMAL_L14"/>
    <property type="match status" value="1"/>
</dbReference>
<name>RL14_SACS2</name>
<comment type="function">
    <text evidence="1">Binds to 23S rRNA. Forms part of two intersubunit bridges in the 70S ribosome.</text>
</comment>
<comment type="subunit">
    <text evidence="1 2">Part of the 50S ribosomal subunit. Forms a cluster with proteins L3 and L24e, part of which may contact the 16S rRNA in 2 intersubunit bridges (By similarity). Contacts initiation factor aIF-6.</text>
</comment>
<comment type="subcellular location">
    <subcellularLocation>
        <location evidence="2">Cytoplasm</location>
    </subcellularLocation>
</comment>
<comment type="similarity">
    <text evidence="1">Belongs to the universal ribosomal protein uL14 family.</text>
</comment>
<proteinExistence type="evidence at protein level"/>
<protein>
    <recommendedName>
        <fullName evidence="1">Large ribosomal subunit protein uL14</fullName>
    </recommendedName>
    <alternativeName>
        <fullName evidence="3">50S ribosomal protein L14</fullName>
    </alternativeName>
</protein>
<gene>
    <name evidence="1" type="primary">rpl14</name>
    <name evidence="1" type="synonym">rpl14Ab</name>
    <name type="ordered locus">SSO0708</name>
    <name type="ORF">C10_022</name>
</gene>
<feature type="chain" id="PRO_0000128578" description="Large ribosomal subunit protein uL14">
    <location>
        <begin position="1"/>
        <end position="138"/>
    </location>
</feature>
<keyword id="KW-0963">Cytoplasm</keyword>
<keyword id="KW-1185">Reference proteome</keyword>
<keyword id="KW-0687">Ribonucleoprotein</keyword>
<keyword id="KW-0689">Ribosomal protein</keyword>
<keyword id="KW-0694">RNA-binding</keyword>
<keyword id="KW-0699">rRNA-binding</keyword>
<evidence type="ECO:0000255" key="1">
    <source>
        <dbReference type="HAMAP-Rule" id="MF_01367"/>
    </source>
</evidence>
<evidence type="ECO:0000269" key="2">
    <source>
    </source>
</evidence>
<evidence type="ECO:0000305" key="3"/>
<sequence length="138" mass="15261">MSEKIQVLGSRKGLTPALQHYSVVNVADNSGGKEAMIIGVYGYRGVLRRVPFANIADMVMVSIKKGTPEVRKQKFRAVIVRQRMPYRRPDGTWISFEDNAVVIINPDGTPKGTEVRGPIAREAAERWPKIASLATLVV</sequence>
<reference key="1">
    <citation type="journal article" date="2000" name="Genome">
        <title>Gene content and organization of a 281-kbp contig from the genome of the extremely thermophilic archaeon, Sulfolobus solfataricus P2.</title>
        <authorList>
            <person name="Charlebois R.L."/>
            <person name="Singh R.K."/>
            <person name="Chan-Weiher C.C.-Y."/>
            <person name="Allard G."/>
            <person name="Chow C."/>
            <person name="Confalonieri F."/>
            <person name="Curtis B."/>
            <person name="Duguet M."/>
            <person name="Erauso G."/>
            <person name="Faguy D."/>
            <person name="Gaasterland T."/>
            <person name="Garrett R.A."/>
            <person name="Gordon P."/>
            <person name="Jeffries A.C."/>
            <person name="Kozera C."/>
            <person name="Kushwaha N."/>
            <person name="Lafleur E."/>
            <person name="Medina N."/>
            <person name="Peng X."/>
            <person name="Penny S.L."/>
            <person name="She Q."/>
            <person name="St Jean A."/>
            <person name="van der Oost J."/>
            <person name="Young F."/>
            <person name="Zivanovic Y."/>
            <person name="Doolittle W.F."/>
            <person name="Ragan M.A."/>
            <person name="Sensen C.W."/>
        </authorList>
    </citation>
    <scope>NUCLEOTIDE SEQUENCE [LARGE SCALE GENOMIC DNA]</scope>
    <source>
        <strain>ATCC 35092 / DSM 1617 / JCM 11322 / P2</strain>
    </source>
</reference>
<reference key="2">
    <citation type="journal article" date="2001" name="Proc. Natl. Acad. Sci. U.S.A.">
        <title>The complete genome of the crenarchaeon Sulfolobus solfataricus P2.</title>
        <authorList>
            <person name="She Q."/>
            <person name="Singh R.K."/>
            <person name="Confalonieri F."/>
            <person name="Zivanovic Y."/>
            <person name="Allard G."/>
            <person name="Awayez M.J."/>
            <person name="Chan-Weiher C.C.-Y."/>
            <person name="Clausen I.G."/>
            <person name="Curtis B.A."/>
            <person name="De Moors A."/>
            <person name="Erauso G."/>
            <person name="Fletcher C."/>
            <person name="Gordon P.M.K."/>
            <person name="Heikamp-de Jong I."/>
            <person name="Jeffries A.C."/>
            <person name="Kozera C.J."/>
            <person name="Medina N."/>
            <person name="Peng X."/>
            <person name="Thi-Ngoc H.P."/>
            <person name="Redder P."/>
            <person name="Schenk M.E."/>
            <person name="Theriault C."/>
            <person name="Tolstrup N."/>
            <person name="Charlebois R.L."/>
            <person name="Doolittle W.F."/>
            <person name="Duguet M."/>
            <person name="Gaasterland T."/>
            <person name="Garrett R.A."/>
            <person name="Ragan M.A."/>
            <person name="Sensen C.W."/>
            <person name="Van der Oost J."/>
        </authorList>
    </citation>
    <scope>NUCLEOTIDE SEQUENCE [LARGE SCALE GENOMIC DNA]</scope>
    <source>
        <strain>ATCC 35092 / DSM 1617 / JCM 11322 / P2</strain>
    </source>
</reference>
<reference key="3">
    <citation type="journal article" date="2009" name="Nucleic Acids Res.">
        <title>Function and ribosomal localization of aIF6, a translational regulator shared by archaea and eukarya.</title>
        <authorList>
            <person name="Benelli D."/>
            <person name="Marzi S."/>
            <person name="Mancone C."/>
            <person name="Alonzi T."/>
            <person name="la Teana A."/>
            <person name="Londei P."/>
        </authorList>
    </citation>
    <scope>INTERACTION WITH INITIATION FACTOR 6 (EIF6)</scope>
    <scope>SUBUNIT</scope>
    <scope>SUBCELLULAR LOCATION</scope>
</reference>
<organism>
    <name type="scientific">Saccharolobus solfataricus (strain ATCC 35092 / DSM 1617 / JCM 11322 / P2)</name>
    <name type="common">Sulfolobus solfataricus</name>
    <dbReference type="NCBI Taxonomy" id="273057"/>
    <lineage>
        <taxon>Archaea</taxon>
        <taxon>Thermoproteota</taxon>
        <taxon>Thermoprotei</taxon>
        <taxon>Sulfolobales</taxon>
        <taxon>Sulfolobaceae</taxon>
        <taxon>Saccharolobus</taxon>
    </lineage>
</organism>
<accession>Q9UX97</accession>